<dbReference type="EC" id="4.99.1.2"/>
<dbReference type="EMBL" id="M15049">
    <property type="protein sequence ID" value="AAA88369.1"/>
    <property type="molecule type" value="Genomic_DNA"/>
</dbReference>
<dbReference type="PIR" id="B29010">
    <property type="entry name" value="B29010"/>
</dbReference>
<dbReference type="RefSeq" id="WP_000761850.1">
    <property type="nucleotide sequence ID" value="NZ_LR890658.1"/>
</dbReference>
<dbReference type="BMRB" id="P08664"/>
<dbReference type="SMR" id="P08664"/>
<dbReference type="GeneID" id="93036299"/>
<dbReference type="BRENDA" id="4.99.1.2">
    <property type="organism ID" value="5690"/>
</dbReference>
<dbReference type="GO" id="GO:0018836">
    <property type="term" value="F:alkylmercury lyase activity"/>
    <property type="evidence" value="ECO:0007669"/>
    <property type="project" value="UniProtKB-UniRule"/>
</dbReference>
<dbReference type="GO" id="GO:0046689">
    <property type="term" value="P:response to mercury ion"/>
    <property type="evidence" value="ECO:0007669"/>
    <property type="project" value="UniProtKB-UniRule"/>
</dbReference>
<dbReference type="Gene3D" id="3.30.450.410">
    <property type="match status" value="1"/>
</dbReference>
<dbReference type="HAMAP" id="MF_00714">
    <property type="entry name" value="MerB"/>
    <property type="match status" value="1"/>
</dbReference>
<dbReference type="InterPro" id="IPR004927">
    <property type="entry name" value="MerB"/>
</dbReference>
<dbReference type="InterPro" id="IPR024259">
    <property type="entry name" value="MerB_HTH_dom"/>
</dbReference>
<dbReference type="InterPro" id="IPR053717">
    <property type="entry name" value="MerB_lyase_sf"/>
</dbReference>
<dbReference type="InterPro" id="IPR036390">
    <property type="entry name" value="WH_DNA-bd_sf"/>
</dbReference>
<dbReference type="NCBIfam" id="NF033555">
    <property type="entry name" value="lyase_MerB"/>
    <property type="match status" value="1"/>
</dbReference>
<dbReference type="NCBIfam" id="NF009710">
    <property type="entry name" value="PRK13239.1"/>
    <property type="match status" value="1"/>
</dbReference>
<dbReference type="Pfam" id="PF12324">
    <property type="entry name" value="HTH_15"/>
    <property type="match status" value="1"/>
</dbReference>
<dbReference type="Pfam" id="PF03243">
    <property type="entry name" value="MerB"/>
    <property type="match status" value="1"/>
</dbReference>
<dbReference type="PIRSF" id="PIRSF001458">
    <property type="entry name" value="MerB"/>
    <property type="match status" value="1"/>
</dbReference>
<dbReference type="PRINTS" id="PR01699">
    <property type="entry name" value="ORGNOHGLYASE"/>
</dbReference>
<dbReference type="SUPFAM" id="SSF160387">
    <property type="entry name" value="NosL/MerB-like"/>
    <property type="match status" value="1"/>
</dbReference>
<dbReference type="SUPFAM" id="SSF46785">
    <property type="entry name" value="Winged helix' DNA-binding domain"/>
    <property type="match status" value="1"/>
</dbReference>
<protein>
    <recommendedName>
        <fullName>Alkylmercury lyase</fullName>
        <ecNumber>4.99.1.2</ecNumber>
    </recommendedName>
    <alternativeName>
        <fullName>Organomercurial lyase</fullName>
    </alternativeName>
</protein>
<name>MERB_SERMA</name>
<keyword id="KW-0456">Lyase</keyword>
<keyword id="KW-0475">Mercuric resistance</keyword>
<keyword id="KW-0476">Mercury</keyword>
<keyword id="KW-0614">Plasmid</keyword>
<accession>P08664</accession>
<proteinExistence type="inferred from homology"/>
<evidence type="ECO:0000305" key="1"/>
<feature type="chain" id="PRO_0000220360" description="Alkylmercury lyase">
    <location>
        <begin position="1"/>
        <end position="212"/>
    </location>
</feature>
<reference key="1">
    <citation type="journal article" date="1987" name="Proc. Natl. Acad. Sci. U.S.A.">
        <title>Cloning and DNA sequence of the mercuric- and organomercurial-resistance determinants of plasmid pDU1358.</title>
        <authorList>
            <person name="Griffin H.G."/>
            <person name="Foster T.J."/>
            <person name="Silver S."/>
            <person name="Misra T.K."/>
        </authorList>
    </citation>
    <scope>NUCLEOTIDE SEQUENCE [GENOMIC DNA]</scope>
</reference>
<sequence>MKLAPYILERLTSVNRTNGTADLLVPLLRELAKGRPVSRTTLAGILDWPAERVAAVLEQATSTEYDKDGNIIGYGLTLRETSYVFEIDDRRLYAWCALDTLIFPALIGRTARVSSHCAATGAPVSLTVSPSEIQAVEPAGMAVSLVLPQEAADVRQSFCCHVHFFASVPTAEDWASKHQGLEGLAIVSVHEAFGLGQEFNRHLLQTMSSRTP</sequence>
<gene>
    <name type="primary">merB</name>
</gene>
<geneLocation type="plasmid">
    <name>pDU1358</name>
</geneLocation>
<comment type="function">
    <text>Cleaves the carbon-mercury bond of organomercurials such as phenylmercuric acetate. One product is Hg(2+), which is subsequently detoxified by the mercuric reductase.</text>
</comment>
<comment type="catalytic activity">
    <reaction>
        <text>an alkylmercury + H(+) = an alkane + Hg(2+)</text>
        <dbReference type="Rhea" id="RHEA:18777"/>
        <dbReference type="ChEBI" id="CHEBI:15378"/>
        <dbReference type="ChEBI" id="CHEBI:16793"/>
        <dbReference type="ChEBI" id="CHEBI:18310"/>
        <dbReference type="ChEBI" id="CHEBI:83725"/>
        <dbReference type="EC" id="4.99.1.2"/>
    </reaction>
</comment>
<comment type="similarity">
    <text evidence="1">Belongs to the MerB family.</text>
</comment>
<organism>
    <name type="scientific">Serratia marcescens</name>
    <dbReference type="NCBI Taxonomy" id="615"/>
    <lineage>
        <taxon>Bacteria</taxon>
        <taxon>Pseudomonadati</taxon>
        <taxon>Pseudomonadota</taxon>
        <taxon>Gammaproteobacteria</taxon>
        <taxon>Enterobacterales</taxon>
        <taxon>Yersiniaceae</taxon>
        <taxon>Serratia</taxon>
    </lineage>
</organism>